<sequence length="433" mass="49090">MGNVPAKEGRSRSSTFSGTGAEIVTRSARRNTTSSADVKKSSRKSEEKDRLREKHWRDLVVRLHENVDGGYLAPYGTYKSNLDFDTEVVRRLVINRQLAPFYTPLNDFDPTWTTEELLVILSQLPLHSIEDAYSDAESEEDDVDNHKIHKSNNYYRRQEQKRKLKHSMETAKQAQKEEETALLHQKMLLKQGGQVSSSLPSKDLLLRLYSDASECPICFLYYPSNLNISRCCLQPICTECFVQIKRLDPHPPHDDASNQPNGDSLPHTLISEPAHCPYCAMADFGVIYDPLSDLRTGINGKCSPGEYRMPEHSDAKSDVQSVKKRPRRKSMAATDPGIITVDNIRPDWEQKLISAKNKLARKAAAASAIHASNLILNGDDSQTSSQQSRLRSRNSGGQTYNTIEERMIEEALRLSLLDEEERRRKERENSSKD</sequence>
<dbReference type="EMBL" id="CH408161">
    <property type="protein sequence ID" value="EDK41451.2"/>
    <property type="molecule type" value="Genomic_DNA"/>
</dbReference>
<dbReference type="RefSeq" id="XP_001482529.1">
    <property type="nucleotide sequence ID" value="XM_001482479.1"/>
</dbReference>
<dbReference type="FunCoup" id="A5DQJ8">
    <property type="interactions" value="54"/>
</dbReference>
<dbReference type="STRING" id="294746.A5DQJ8"/>
<dbReference type="GeneID" id="5124287"/>
<dbReference type="KEGG" id="pgu:PGUG_05549"/>
<dbReference type="eggNOG" id="KOG2789">
    <property type="taxonomic scope" value="Eukaryota"/>
</dbReference>
<dbReference type="HOGENOM" id="CLU_009068_2_0_1"/>
<dbReference type="InParanoid" id="A5DQJ8"/>
<dbReference type="OMA" id="ISEPANC"/>
<dbReference type="OrthoDB" id="21471at2759"/>
<dbReference type="Proteomes" id="UP000001997">
    <property type="component" value="Unassembled WGS sequence"/>
</dbReference>
<dbReference type="GO" id="GO:0005737">
    <property type="term" value="C:cytoplasm"/>
    <property type="evidence" value="ECO:0007669"/>
    <property type="project" value="UniProtKB-SubCell"/>
</dbReference>
<dbReference type="GO" id="GO:0042149">
    <property type="term" value="P:cellular response to glucose starvation"/>
    <property type="evidence" value="ECO:0007669"/>
    <property type="project" value="EnsemblFungi"/>
</dbReference>
<dbReference type="CDD" id="cd24139">
    <property type="entry name" value="SIP5-like"/>
    <property type="match status" value="1"/>
</dbReference>
<dbReference type="InterPro" id="IPR039301">
    <property type="entry name" value="Sip5/DA2"/>
</dbReference>
<dbReference type="PANTHER" id="PTHR31315">
    <property type="entry name" value="PROTEIN SIP5"/>
    <property type="match status" value="1"/>
</dbReference>
<dbReference type="PANTHER" id="PTHR31315:SF1">
    <property type="entry name" value="PROTEIN SIP5"/>
    <property type="match status" value="1"/>
</dbReference>
<reference key="1">
    <citation type="journal article" date="2009" name="Nature">
        <title>Evolution of pathogenicity and sexual reproduction in eight Candida genomes.</title>
        <authorList>
            <person name="Butler G."/>
            <person name="Rasmussen M.D."/>
            <person name="Lin M.F."/>
            <person name="Santos M.A.S."/>
            <person name="Sakthikumar S."/>
            <person name="Munro C.A."/>
            <person name="Rheinbay E."/>
            <person name="Grabherr M."/>
            <person name="Forche A."/>
            <person name="Reedy J.L."/>
            <person name="Agrafioti I."/>
            <person name="Arnaud M.B."/>
            <person name="Bates S."/>
            <person name="Brown A.J.P."/>
            <person name="Brunke S."/>
            <person name="Costanzo M.C."/>
            <person name="Fitzpatrick D.A."/>
            <person name="de Groot P.W.J."/>
            <person name="Harris D."/>
            <person name="Hoyer L.L."/>
            <person name="Hube B."/>
            <person name="Klis F.M."/>
            <person name="Kodira C."/>
            <person name="Lennard N."/>
            <person name="Logue M.E."/>
            <person name="Martin R."/>
            <person name="Neiman A.M."/>
            <person name="Nikolaou E."/>
            <person name="Quail M.A."/>
            <person name="Quinn J."/>
            <person name="Santos M.C."/>
            <person name="Schmitzberger F.F."/>
            <person name="Sherlock G."/>
            <person name="Shah P."/>
            <person name="Silverstein K.A.T."/>
            <person name="Skrzypek M.S."/>
            <person name="Soll D."/>
            <person name="Staggs R."/>
            <person name="Stansfield I."/>
            <person name="Stumpf M.P.H."/>
            <person name="Sudbery P.E."/>
            <person name="Srikantha T."/>
            <person name="Zeng Q."/>
            <person name="Berman J."/>
            <person name="Berriman M."/>
            <person name="Heitman J."/>
            <person name="Gow N.A.R."/>
            <person name="Lorenz M.C."/>
            <person name="Birren B.W."/>
            <person name="Kellis M."/>
            <person name="Cuomo C.A."/>
        </authorList>
    </citation>
    <scope>NUCLEOTIDE SEQUENCE [LARGE SCALE GENOMIC DNA]</scope>
    <source>
        <strain>ATCC 6260 / CBS 566 / DSM 6381 / JCM 1539 / NBRC 10279 / NRRL Y-324</strain>
    </source>
</reference>
<protein>
    <recommendedName>
        <fullName>Protein SIP5</fullName>
    </recommendedName>
</protein>
<accession>A5DQJ8</accession>
<gene>
    <name type="primary">SIP5</name>
    <name type="ORF">PGUG_05549</name>
</gene>
<organism>
    <name type="scientific">Meyerozyma guilliermondii (strain ATCC 6260 / CBS 566 / DSM 6381 / JCM 1539 / NBRC 10279 / NRRL Y-324)</name>
    <name type="common">Yeast</name>
    <name type="synonym">Candida guilliermondii</name>
    <dbReference type="NCBI Taxonomy" id="294746"/>
    <lineage>
        <taxon>Eukaryota</taxon>
        <taxon>Fungi</taxon>
        <taxon>Dikarya</taxon>
        <taxon>Ascomycota</taxon>
        <taxon>Saccharomycotina</taxon>
        <taxon>Pichiomycetes</taxon>
        <taxon>Debaryomycetaceae</taxon>
        <taxon>Meyerozyma</taxon>
    </lineage>
</organism>
<keyword id="KW-0963">Cytoplasm</keyword>
<keyword id="KW-1185">Reference proteome</keyword>
<proteinExistence type="inferred from homology"/>
<name>SIP5_PICGU</name>
<comment type="function">
    <text evidence="1">May negatively regulate the SNF1 kinase.</text>
</comment>
<comment type="subcellular location">
    <subcellularLocation>
        <location evidence="1">Cytoplasm</location>
    </subcellularLocation>
</comment>
<comment type="similarity">
    <text evidence="3">Belongs to the SIP5 family.</text>
</comment>
<evidence type="ECO:0000250" key="1"/>
<evidence type="ECO:0000256" key="2">
    <source>
        <dbReference type="SAM" id="MobiDB-lite"/>
    </source>
</evidence>
<evidence type="ECO:0000305" key="3"/>
<feature type="chain" id="PRO_0000333441" description="Protein SIP5">
    <location>
        <begin position="1"/>
        <end position="433"/>
    </location>
</feature>
<feature type="region of interest" description="Disordered" evidence="2">
    <location>
        <begin position="1"/>
        <end position="49"/>
    </location>
</feature>
<feature type="region of interest" description="Disordered" evidence="2">
    <location>
        <begin position="305"/>
        <end position="334"/>
    </location>
</feature>
<feature type="region of interest" description="Disordered" evidence="2">
    <location>
        <begin position="377"/>
        <end position="404"/>
    </location>
</feature>
<feature type="compositionally biased region" description="Basic and acidic residues" evidence="2">
    <location>
        <begin position="37"/>
        <end position="49"/>
    </location>
</feature>
<feature type="compositionally biased region" description="Basic and acidic residues" evidence="2">
    <location>
        <begin position="308"/>
        <end position="317"/>
    </location>
</feature>
<feature type="compositionally biased region" description="Low complexity" evidence="2">
    <location>
        <begin position="377"/>
        <end position="395"/>
    </location>
</feature>